<dbReference type="EC" id="2.7.7.7" evidence="1"/>
<dbReference type="EMBL" id="CP000422">
    <property type="protein sequence ID" value="ABJ67944.1"/>
    <property type="molecule type" value="Genomic_DNA"/>
</dbReference>
<dbReference type="RefSeq" id="WP_011673320.1">
    <property type="nucleotide sequence ID" value="NC_008525.1"/>
</dbReference>
<dbReference type="SMR" id="Q03FS8"/>
<dbReference type="STRING" id="278197.PEPE_0885"/>
<dbReference type="GeneID" id="33062949"/>
<dbReference type="KEGG" id="ppe:PEPE_0885"/>
<dbReference type="eggNOG" id="COG2176">
    <property type="taxonomic scope" value="Bacteria"/>
</dbReference>
<dbReference type="HOGENOM" id="CLU_003297_0_0_9"/>
<dbReference type="OrthoDB" id="9804290at2"/>
<dbReference type="Proteomes" id="UP000000773">
    <property type="component" value="Chromosome"/>
</dbReference>
<dbReference type="GO" id="GO:0005737">
    <property type="term" value="C:cytoplasm"/>
    <property type="evidence" value="ECO:0007669"/>
    <property type="project" value="UniProtKB-SubCell"/>
</dbReference>
<dbReference type="GO" id="GO:0008408">
    <property type="term" value="F:3'-5' exonuclease activity"/>
    <property type="evidence" value="ECO:0007669"/>
    <property type="project" value="UniProtKB-UniRule"/>
</dbReference>
<dbReference type="GO" id="GO:0003677">
    <property type="term" value="F:DNA binding"/>
    <property type="evidence" value="ECO:0007669"/>
    <property type="project" value="UniProtKB-UniRule"/>
</dbReference>
<dbReference type="GO" id="GO:0003887">
    <property type="term" value="F:DNA-directed DNA polymerase activity"/>
    <property type="evidence" value="ECO:0007669"/>
    <property type="project" value="UniProtKB-UniRule"/>
</dbReference>
<dbReference type="GO" id="GO:0006261">
    <property type="term" value="P:DNA-templated DNA replication"/>
    <property type="evidence" value="ECO:0007669"/>
    <property type="project" value="UniProtKB-UniRule"/>
</dbReference>
<dbReference type="CDD" id="cd06127">
    <property type="entry name" value="DEDDh"/>
    <property type="match status" value="1"/>
</dbReference>
<dbReference type="CDD" id="cd07435">
    <property type="entry name" value="PHP_PolIIIA_POLC"/>
    <property type="match status" value="1"/>
</dbReference>
<dbReference type="CDD" id="cd04484">
    <property type="entry name" value="polC_OBF"/>
    <property type="match status" value="1"/>
</dbReference>
<dbReference type="FunFam" id="3.30.420.10:FF:000045">
    <property type="entry name" value="3'-5' exonuclease DinG"/>
    <property type="match status" value="1"/>
</dbReference>
<dbReference type="Gene3D" id="1.10.150.870">
    <property type="match status" value="1"/>
</dbReference>
<dbReference type="Gene3D" id="3.30.1900.20">
    <property type="match status" value="2"/>
</dbReference>
<dbReference type="Gene3D" id="6.10.140.1510">
    <property type="match status" value="1"/>
</dbReference>
<dbReference type="Gene3D" id="3.20.20.140">
    <property type="entry name" value="Metal-dependent hydrolases"/>
    <property type="match status" value="2"/>
</dbReference>
<dbReference type="Gene3D" id="2.40.50.140">
    <property type="entry name" value="Nucleic acid-binding proteins"/>
    <property type="match status" value="1"/>
</dbReference>
<dbReference type="Gene3D" id="1.10.150.700">
    <property type="entry name" value="PolC, middle finger domain"/>
    <property type="match status" value="1"/>
</dbReference>
<dbReference type="Gene3D" id="3.30.420.10">
    <property type="entry name" value="Ribonuclease H-like superfamily/Ribonuclease H"/>
    <property type="match status" value="1"/>
</dbReference>
<dbReference type="HAMAP" id="MF_00356">
    <property type="entry name" value="DNApol_PolC"/>
    <property type="match status" value="1"/>
</dbReference>
<dbReference type="InterPro" id="IPR011708">
    <property type="entry name" value="DNA_pol3_alpha_NTPase_dom"/>
</dbReference>
<dbReference type="InterPro" id="IPR040982">
    <property type="entry name" value="DNA_pol3_finger"/>
</dbReference>
<dbReference type="InterPro" id="IPR024754">
    <property type="entry name" value="DNA_PolC-like_N_II"/>
</dbReference>
<dbReference type="InterPro" id="IPR028112">
    <property type="entry name" value="DNA_PolC-type_N_I"/>
</dbReference>
<dbReference type="InterPro" id="IPR004805">
    <property type="entry name" value="DnaE2/DnaE/PolC"/>
</dbReference>
<dbReference type="InterPro" id="IPR029460">
    <property type="entry name" value="DNAPol_HHH"/>
</dbReference>
<dbReference type="InterPro" id="IPR006054">
    <property type="entry name" value="DnaQ"/>
</dbReference>
<dbReference type="InterPro" id="IPR013520">
    <property type="entry name" value="Exonuclease_RNaseT/DNA_pol3"/>
</dbReference>
<dbReference type="InterPro" id="IPR012340">
    <property type="entry name" value="NA-bd_OB-fold"/>
</dbReference>
<dbReference type="InterPro" id="IPR004365">
    <property type="entry name" value="NA-bd_OB_tRNA"/>
</dbReference>
<dbReference type="InterPro" id="IPR004013">
    <property type="entry name" value="PHP_dom"/>
</dbReference>
<dbReference type="InterPro" id="IPR003141">
    <property type="entry name" value="Pol/His_phosphatase_N"/>
</dbReference>
<dbReference type="InterPro" id="IPR006308">
    <property type="entry name" value="Pol_III_a_PolC-type_gram_pos"/>
</dbReference>
<dbReference type="InterPro" id="IPR044923">
    <property type="entry name" value="PolC_middle_finger_sf"/>
</dbReference>
<dbReference type="InterPro" id="IPR012337">
    <property type="entry name" value="RNaseH-like_sf"/>
</dbReference>
<dbReference type="InterPro" id="IPR036397">
    <property type="entry name" value="RNaseH_sf"/>
</dbReference>
<dbReference type="NCBIfam" id="TIGR00573">
    <property type="entry name" value="dnaq"/>
    <property type="match status" value="1"/>
</dbReference>
<dbReference type="NCBIfam" id="TIGR01405">
    <property type="entry name" value="polC_Gram_pos"/>
    <property type="match status" value="1"/>
</dbReference>
<dbReference type="NCBIfam" id="NF001688">
    <property type="entry name" value="PRK00448.1"/>
    <property type="match status" value="1"/>
</dbReference>
<dbReference type="PANTHER" id="PTHR32294:SF5">
    <property type="entry name" value="DNA POLYMERASE III POLC-TYPE"/>
    <property type="match status" value="1"/>
</dbReference>
<dbReference type="PANTHER" id="PTHR32294">
    <property type="entry name" value="DNA POLYMERASE III SUBUNIT ALPHA"/>
    <property type="match status" value="1"/>
</dbReference>
<dbReference type="Pfam" id="PF14480">
    <property type="entry name" value="DNA_pol3_a_NI"/>
    <property type="match status" value="1"/>
</dbReference>
<dbReference type="Pfam" id="PF11490">
    <property type="entry name" value="DNA_pol3_a_NII"/>
    <property type="match status" value="1"/>
</dbReference>
<dbReference type="Pfam" id="PF07733">
    <property type="entry name" value="DNA_pol3_alpha"/>
    <property type="match status" value="1"/>
</dbReference>
<dbReference type="Pfam" id="PF17657">
    <property type="entry name" value="DNA_pol3_finger"/>
    <property type="match status" value="1"/>
</dbReference>
<dbReference type="Pfam" id="PF14579">
    <property type="entry name" value="HHH_6"/>
    <property type="match status" value="1"/>
</dbReference>
<dbReference type="Pfam" id="PF02811">
    <property type="entry name" value="PHP"/>
    <property type="match status" value="1"/>
</dbReference>
<dbReference type="Pfam" id="PF00929">
    <property type="entry name" value="RNase_T"/>
    <property type="match status" value="1"/>
</dbReference>
<dbReference type="Pfam" id="PF01336">
    <property type="entry name" value="tRNA_anti-codon"/>
    <property type="match status" value="1"/>
</dbReference>
<dbReference type="SMART" id="SM00479">
    <property type="entry name" value="EXOIII"/>
    <property type="match status" value="1"/>
</dbReference>
<dbReference type="SMART" id="SM00481">
    <property type="entry name" value="POLIIIAc"/>
    <property type="match status" value="1"/>
</dbReference>
<dbReference type="SUPFAM" id="SSF160975">
    <property type="entry name" value="AF1531-like"/>
    <property type="match status" value="1"/>
</dbReference>
<dbReference type="SUPFAM" id="SSF50249">
    <property type="entry name" value="Nucleic acid-binding proteins"/>
    <property type="match status" value="1"/>
</dbReference>
<dbReference type="SUPFAM" id="SSF53098">
    <property type="entry name" value="Ribonuclease H-like"/>
    <property type="match status" value="1"/>
</dbReference>
<comment type="function">
    <text evidence="1">Required for replicative DNA synthesis. This DNA polymerase also exhibits 3' to 5' exonuclease activity.</text>
</comment>
<comment type="catalytic activity">
    <reaction evidence="1">
        <text>DNA(n) + a 2'-deoxyribonucleoside 5'-triphosphate = DNA(n+1) + diphosphate</text>
        <dbReference type="Rhea" id="RHEA:22508"/>
        <dbReference type="Rhea" id="RHEA-COMP:17339"/>
        <dbReference type="Rhea" id="RHEA-COMP:17340"/>
        <dbReference type="ChEBI" id="CHEBI:33019"/>
        <dbReference type="ChEBI" id="CHEBI:61560"/>
        <dbReference type="ChEBI" id="CHEBI:173112"/>
        <dbReference type="EC" id="2.7.7.7"/>
    </reaction>
</comment>
<comment type="subcellular location">
    <subcellularLocation>
        <location evidence="1">Cytoplasm</location>
    </subcellularLocation>
</comment>
<comment type="similarity">
    <text evidence="1">Belongs to the DNA polymerase type-C family. PolC subfamily.</text>
</comment>
<sequence>MSLSENEQFRVLLEQIDLLDNAELKDGSIKDLTVHSNSKRWTFSFEFNDILPLQIFVEFHHQLVNTFGSIAQIDFSIDTINKNNVATHATDYWDWIIKNSGIQSSLLQVLCDKSIPEFKDGQLVVKVDNQITKNFLNDDVLQTLSNTYQKVGFGPIKIKPTIDDNTAQERLQAYHEEKIKRDQAIVQKATEAIKKAESKKKASDKAMPEFNGKVQMGKPINGKDNIVQLRDITQEERSVSIEGYIFDAEVKTLRSERQLLIFKVTDYTSSITIKKFSRNEADEQLFSAIKKGLWVRVRGSIQEDSFMKDLTMNAYDIMEVDHADRQDTATDKRVELHLHTNMSTMDATNGISDLVGQAAKWGHPAVAVTDHAGLQAFPEAHAAGKKSGIKTLFGVEANLVDDGVPIGYNSEHCPLKGGKYVIFDVETTGLSAIYDKVIELSAVKMENGNVIDQFEEFIDPGFPLSETTINLTSITDEMVRGSMSEKEVFTKFREFYEDAIIVGHNVTFDIGFMNTGYLRHGMEEIKNPIIDTLTLARFLYPTLKGYRLNTLAKKFGVALEHHHRAIYDSETTGHLCYLFLKDAEERYGIEYHDQLNDHMTENEAYKHARPSHAILIAKTQAGLKNLFKLVSMSNVKYYYRVPRIPRSELEKLREGIIVGSACSSGDVFTAMMQKGYADARRKAKFYDYLEVMPKPVYQPLIEQELVSDNKKLEEIIANIVKLGEDLDIPVVATGDVHYLNPQDYIYRKILINSQGGANPLNRSELPDVHFRTTDEMLEDFSFLGPEVAHKIVVENSNKIADSVDDGISPVKDKLYTPKMPGAEDRIKQLSMDRAHALYGEVLPEIVQERLDKELTSIIGNGFSVIYLIAQRLVHKSNKDGYLVGSRGSVGSSFVATMSGITEVNPLPPHYRCPKCQYSFFYTKGEYGSGYDLPDKECPECGTWMIGDGQDIPFETFLGFKGDKVPDIDLNFSGDYQPIAHNYMQVLFGKDNVFRAGTIGTVADKTAFGYVKAYERDTNQHLRGAEIERLAKGATGVKRTTGQHPAGILIVPDYMDVYDFSPIQYPADDQTAAWETTHFDFHSIHDNILKMDILGHDDPTMIRKLQDLSGIDPETIPTDDPGVMKIFSGPEVLGVDENQIQSKTGTLGIPEFGTRFVRGMLEETHPTSYSELLQISGLSHGTDVWLGNAEELIKAGTVTLKEVIGCRDNIMMDLIHYGLDSQSSFQIMESVRKGKGIPEGYEDKMRAANVPDWYIESCGKIKYMFPRAHASAYVLMALRIAYFKVYYPLVYYAAYFTVRADDFDIVSMARGKESLKNRMQEINDKGNDASTKEKNLLTVLELANEMLERGFEFKMIDIEKSDAEEWLIEGKSLIAPFNALPGLGLNVAKQIVAARADKPFLSKEDLSKRGHVSQTLIDFMTENNVLSELPDENQLSLF</sequence>
<accession>Q03FS8</accession>
<gene>
    <name evidence="1" type="primary">polC</name>
    <name type="ordered locus">PEPE_0885</name>
</gene>
<organism>
    <name type="scientific">Pediococcus pentosaceus (strain ATCC 25745 / CCUG 21536 / LMG 10740 / 183-1w)</name>
    <dbReference type="NCBI Taxonomy" id="278197"/>
    <lineage>
        <taxon>Bacteria</taxon>
        <taxon>Bacillati</taxon>
        <taxon>Bacillota</taxon>
        <taxon>Bacilli</taxon>
        <taxon>Lactobacillales</taxon>
        <taxon>Lactobacillaceae</taxon>
        <taxon>Pediococcus</taxon>
    </lineage>
</organism>
<feature type="chain" id="PRO_1000048477" description="DNA polymerase III PolC-type">
    <location>
        <begin position="1"/>
        <end position="1437"/>
    </location>
</feature>
<feature type="domain" description="Exonuclease">
    <location>
        <begin position="420"/>
        <end position="576"/>
    </location>
</feature>
<protein>
    <recommendedName>
        <fullName evidence="1">DNA polymerase III PolC-type</fullName>
        <shortName evidence="1">PolIII</shortName>
        <ecNumber evidence="1">2.7.7.7</ecNumber>
    </recommendedName>
</protein>
<name>DPO3_PEDPA</name>
<evidence type="ECO:0000255" key="1">
    <source>
        <dbReference type="HAMAP-Rule" id="MF_00356"/>
    </source>
</evidence>
<keyword id="KW-0963">Cytoplasm</keyword>
<keyword id="KW-0235">DNA replication</keyword>
<keyword id="KW-0239">DNA-directed DNA polymerase</keyword>
<keyword id="KW-0269">Exonuclease</keyword>
<keyword id="KW-0378">Hydrolase</keyword>
<keyword id="KW-0540">Nuclease</keyword>
<keyword id="KW-0548">Nucleotidyltransferase</keyword>
<keyword id="KW-0808">Transferase</keyword>
<proteinExistence type="inferred from homology"/>
<reference key="1">
    <citation type="journal article" date="2006" name="Proc. Natl. Acad. Sci. U.S.A.">
        <title>Comparative genomics of the lactic acid bacteria.</title>
        <authorList>
            <person name="Makarova K.S."/>
            <person name="Slesarev A."/>
            <person name="Wolf Y.I."/>
            <person name="Sorokin A."/>
            <person name="Mirkin B."/>
            <person name="Koonin E.V."/>
            <person name="Pavlov A."/>
            <person name="Pavlova N."/>
            <person name="Karamychev V."/>
            <person name="Polouchine N."/>
            <person name="Shakhova V."/>
            <person name="Grigoriev I."/>
            <person name="Lou Y."/>
            <person name="Rohksar D."/>
            <person name="Lucas S."/>
            <person name="Huang K."/>
            <person name="Goodstein D.M."/>
            <person name="Hawkins T."/>
            <person name="Plengvidhya V."/>
            <person name="Welker D."/>
            <person name="Hughes J."/>
            <person name="Goh Y."/>
            <person name="Benson A."/>
            <person name="Baldwin K."/>
            <person name="Lee J.-H."/>
            <person name="Diaz-Muniz I."/>
            <person name="Dosti B."/>
            <person name="Smeianov V."/>
            <person name="Wechter W."/>
            <person name="Barabote R."/>
            <person name="Lorca G."/>
            <person name="Altermann E."/>
            <person name="Barrangou R."/>
            <person name="Ganesan B."/>
            <person name="Xie Y."/>
            <person name="Rawsthorne H."/>
            <person name="Tamir D."/>
            <person name="Parker C."/>
            <person name="Breidt F."/>
            <person name="Broadbent J.R."/>
            <person name="Hutkins R."/>
            <person name="O'Sullivan D."/>
            <person name="Steele J."/>
            <person name="Unlu G."/>
            <person name="Saier M.H. Jr."/>
            <person name="Klaenhammer T."/>
            <person name="Richardson P."/>
            <person name="Kozyavkin S."/>
            <person name="Weimer B.C."/>
            <person name="Mills D.A."/>
        </authorList>
    </citation>
    <scope>NUCLEOTIDE SEQUENCE [LARGE SCALE GENOMIC DNA]</scope>
    <source>
        <strain>ATCC 25745 / CCUG 21536 / LMG 10740 / 183-1w</strain>
    </source>
</reference>